<dbReference type="EMBL" id="AL035440">
    <property type="protein sequence ID" value="CAB36522.1"/>
    <property type="status" value="ALT_SEQ"/>
    <property type="molecule type" value="Genomic_DNA"/>
</dbReference>
<dbReference type="EMBL" id="AL161565">
    <property type="protein sequence ID" value="CAB79531.1"/>
    <property type="status" value="ALT_SEQ"/>
    <property type="molecule type" value="Genomic_DNA"/>
</dbReference>
<dbReference type="EMBL" id="CP002687">
    <property type="protein sequence ID" value="AEE85249.1"/>
    <property type="molecule type" value="Genomic_DNA"/>
</dbReference>
<dbReference type="EMBL" id="AY085430">
    <property type="protein sequence ID" value="AAM62657.1"/>
    <property type="molecule type" value="mRNA"/>
</dbReference>
<dbReference type="EMBL" id="BT030366">
    <property type="protein sequence ID" value="ABO38779.1"/>
    <property type="molecule type" value="mRNA"/>
</dbReference>
<dbReference type="PIR" id="T04799">
    <property type="entry name" value="T04799"/>
</dbReference>
<dbReference type="RefSeq" id="NP_567756.1">
    <property type="nucleotide sequence ID" value="NM_118810.4"/>
</dbReference>
<dbReference type="SMR" id="Q8LEG3"/>
<dbReference type="BioGRID" id="14070">
    <property type="interactions" value="1"/>
</dbReference>
<dbReference type="FunCoup" id="Q8LEG3">
    <property type="interactions" value="2456"/>
</dbReference>
<dbReference type="STRING" id="3702.Q8LEG3"/>
<dbReference type="iPTMnet" id="Q8LEG3"/>
<dbReference type="PaxDb" id="3702-AT4G26760.1"/>
<dbReference type="ProteomicsDB" id="238840"/>
<dbReference type="EnsemblPlants" id="AT4G26760.1">
    <property type="protein sequence ID" value="AT4G26760.1"/>
    <property type="gene ID" value="AT4G26760"/>
</dbReference>
<dbReference type="GeneID" id="828783"/>
<dbReference type="Gramene" id="AT4G26760.1">
    <property type="protein sequence ID" value="AT4G26760.1"/>
    <property type="gene ID" value="AT4G26760"/>
</dbReference>
<dbReference type="KEGG" id="ath:AT4G26760"/>
<dbReference type="Araport" id="AT4G26760"/>
<dbReference type="TAIR" id="AT4G26760">
    <property type="gene designation" value="MAP65-2"/>
</dbReference>
<dbReference type="eggNOG" id="KOG4302">
    <property type="taxonomic scope" value="Eukaryota"/>
</dbReference>
<dbReference type="HOGENOM" id="CLU_011760_1_0_1"/>
<dbReference type="InParanoid" id="Q8LEG3"/>
<dbReference type="OMA" id="YISASVH"/>
<dbReference type="PhylomeDB" id="Q8LEG3"/>
<dbReference type="PRO" id="PR:Q8LEG3"/>
<dbReference type="Proteomes" id="UP000006548">
    <property type="component" value="Chromosome 4"/>
</dbReference>
<dbReference type="ExpressionAtlas" id="Q8LEG3">
    <property type="expression patterns" value="baseline and differential"/>
</dbReference>
<dbReference type="GO" id="GO:0055028">
    <property type="term" value="C:cortical microtubule"/>
    <property type="evidence" value="ECO:0000314"/>
    <property type="project" value="TAIR"/>
</dbReference>
<dbReference type="GO" id="GO:0005829">
    <property type="term" value="C:cytosol"/>
    <property type="evidence" value="ECO:0007005"/>
    <property type="project" value="TAIR"/>
</dbReference>
<dbReference type="GO" id="GO:0005874">
    <property type="term" value="C:microtubule"/>
    <property type="evidence" value="ECO:0000314"/>
    <property type="project" value="TAIR"/>
</dbReference>
<dbReference type="GO" id="GO:0072686">
    <property type="term" value="C:mitotic spindle"/>
    <property type="evidence" value="ECO:0000314"/>
    <property type="project" value="TAIR"/>
</dbReference>
<dbReference type="GO" id="GO:1990023">
    <property type="term" value="C:mitotic spindle midzone"/>
    <property type="evidence" value="ECO:0000314"/>
    <property type="project" value="TAIR"/>
</dbReference>
<dbReference type="GO" id="GO:0005634">
    <property type="term" value="C:nucleus"/>
    <property type="evidence" value="ECO:0007669"/>
    <property type="project" value="UniProtKB-SubCell"/>
</dbReference>
<dbReference type="GO" id="GO:0009524">
    <property type="term" value="C:phragmoplast"/>
    <property type="evidence" value="ECO:0000314"/>
    <property type="project" value="TAIR"/>
</dbReference>
<dbReference type="GO" id="GO:0009574">
    <property type="term" value="C:preprophase band"/>
    <property type="evidence" value="ECO:0000314"/>
    <property type="project" value="TAIR"/>
</dbReference>
<dbReference type="GO" id="GO:0005819">
    <property type="term" value="C:spindle"/>
    <property type="evidence" value="ECO:0000314"/>
    <property type="project" value="TAIR"/>
</dbReference>
<dbReference type="GO" id="GO:0000922">
    <property type="term" value="C:spindle pole"/>
    <property type="evidence" value="ECO:0007669"/>
    <property type="project" value="UniProtKB-SubCell"/>
</dbReference>
<dbReference type="GO" id="GO:0008017">
    <property type="term" value="F:microtubule binding"/>
    <property type="evidence" value="ECO:0007669"/>
    <property type="project" value="InterPro"/>
</dbReference>
<dbReference type="GO" id="GO:0051301">
    <property type="term" value="P:cell division"/>
    <property type="evidence" value="ECO:0000316"/>
    <property type="project" value="TAIR"/>
</dbReference>
<dbReference type="GO" id="GO:0000911">
    <property type="term" value="P:cytokinesis by cell plate formation"/>
    <property type="evidence" value="ECO:0000316"/>
    <property type="project" value="TAIR"/>
</dbReference>
<dbReference type="GO" id="GO:0000226">
    <property type="term" value="P:microtubule cytoskeleton organization"/>
    <property type="evidence" value="ECO:0007669"/>
    <property type="project" value="InterPro"/>
</dbReference>
<dbReference type="GO" id="GO:0048528">
    <property type="term" value="P:post-embryonic root development"/>
    <property type="evidence" value="ECO:0000316"/>
    <property type="project" value="TAIR"/>
</dbReference>
<dbReference type="FunFam" id="1.20.58.1520:FF:000002">
    <property type="entry name" value="65-kDa microtubule-associated protein 6"/>
    <property type="match status" value="1"/>
</dbReference>
<dbReference type="Gene3D" id="1.20.58.1520">
    <property type="match status" value="1"/>
</dbReference>
<dbReference type="Gene3D" id="6.10.140.180">
    <property type="match status" value="1"/>
</dbReference>
<dbReference type="InterPro" id="IPR007145">
    <property type="entry name" value="MAP65_Ase1_PRC1"/>
</dbReference>
<dbReference type="PANTHER" id="PTHR19321:SF21">
    <property type="entry name" value="65-KDA MICROTUBULE-ASSOCIATED PROTEIN 2"/>
    <property type="match status" value="1"/>
</dbReference>
<dbReference type="PANTHER" id="PTHR19321">
    <property type="entry name" value="PROTEIN REGULATOR OF CYTOKINESIS 1 PRC1-RELATED"/>
    <property type="match status" value="1"/>
</dbReference>
<dbReference type="Pfam" id="PF03999">
    <property type="entry name" value="MAP65_ASE1"/>
    <property type="match status" value="1"/>
</dbReference>
<gene>
    <name type="primary">MAP65-2</name>
    <name type="ordered locus">At4g26760</name>
    <name type="ORF">F10M23.100</name>
</gene>
<proteinExistence type="evidence at protein level"/>
<organism>
    <name type="scientific">Arabidopsis thaliana</name>
    <name type="common">Mouse-ear cress</name>
    <dbReference type="NCBI Taxonomy" id="3702"/>
    <lineage>
        <taxon>Eukaryota</taxon>
        <taxon>Viridiplantae</taxon>
        <taxon>Streptophyta</taxon>
        <taxon>Embryophyta</taxon>
        <taxon>Tracheophyta</taxon>
        <taxon>Spermatophyta</taxon>
        <taxon>Magnoliopsida</taxon>
        <taxon>eudicotyledons</taxon>
        <taxon>Gunneridae</taxon>
        <taxon>Pentapetalae</taxon>
        <taxon>rosids</taxon>
        <taxon>malvids</taxon>
        <taxon>Brassicales</taxon>
        <taxon>Brassicaceae</taxon>
        <taxon>Camelineae</taxon>
        <taxon>Arabidopsis</taxon>
    </lineage>
</organism>
<feature type="chain" id="PRO_0000395473" description="65-kDa microtubule-associated protein 2">
    <location>
        <begin position="1"/>
        <end position="578"/>
    </location>
</feature>
<feature type="region of interest" description="Disordered" evidence="4">
    <location>
        <begin position="473"/>
        <end position="578"/>
    </location>
</feature>
<feature type="coiled-coil region" evidence="3">
    <location>
        <begin position="64"/>
        <end position="84"/>
    </location>
</feature>
<feature type="coiled-coil region" evidence="3">
    <location>
        <begin position="151"/>
        <end position="184"/>
    </location>
</feature>
<feature type="coiled-coil region" evidence="3">
    <location>
        <begin position="235"/>
        <end position="257"/>
    </location>
</feature>
<feature type="coiled-coil region" evidence="3">
    <location>
        <begin position="290"/>
        <end position="312"/>
    </location>
</feature>
<feature type="coiled-coil region" evidence="3">
    <location>
        <begin position="461"/>
        <end position="489"/>
    </location>
</feature>
<feature type="compositionally biased region" description="Basic and acidic residues" evidence="4">
    <location>
        <begin position="473"/>
        <end position="494"/>
    </location>
</feature>
<feature type="compositionally biased region" description="Polar residues" evidence="4">
    <location>
        <begin position="549"/>
        <end position="558"/>
    </location>
</feature>
<feature type="site" description="Microtubule binding" evidence="1">
    <location>
        <position position="409"/>
    </location>
</feature>
<feature type="site" description="Microtubule binding" evidence="1">
    <location>
        <position position="420"/>
    </location>
</feature>
<feature type="modified residue" description="Phosphoserine" evidence="2">
    <location>
        <position position="503"/>
    </location>
</feature>
<feature type="modified residue" description="Phosphoserine" evidence="2">
    <location>
        <position position="532"/>
    </location>
</feature>
<feature type="modified residue" description="Phosphoserine" evidence="2">
    <location>
        <position position="566"/>
    </location>
</feature>
<feature type="modified residue" description="Phosphoserine" evidence="2">
    <location>
        <position position="569"/>
    </location>
</feature>
<feature type="modified residue" description="Phosphoserine" evidence="2">
    <location>
        <position position="577"/>
    </location>
</feature>
<protein>
    <recommendedName>
        <fullName>65-kDa microtubule-associated protein 2</fullName>
        <shortName>AtMAP65-2</shortName>
    </recommendedName>
</protein>
<keyword id="KW-0131">Cell cycle</keyword>
<keyword id="KW-0132">Cell division</keyword>
<keyword id="KW-0175">Coiled coil</keyword>
<keyword id="KW-0963">Cytoplasm</keyword>
<keyword id="KW-0206">Cytoskeleton</keyword>
<keyword id="KW-0493">Microtubule</keyword>
<keyword id="KW-0498">Mitosis</keyword>
<keyword id="KW-0539">Nucleus</keyword>
<keyword id="KW-0597">Phosphoprotein</keyword>
<keyword id="KW-1185">Reference proteome</keyword>
<evidence type="ECO:0000250" key="1"/>
<evidence type="ECO:0000250" key="2">
    <source>
        <dbReference type="UniProtKB" id="Q9FLP0"/>
    </source>
</evidence>
<evidence type="ECO:0000255" key="3"/>
<evidence type="ECO:0000256" key="4">
    <source>
        <dbReference type="SAM" id="MobiDB-lite"/>
    </source>
</evidence>
<evidence type="ECO:0000269" key="5">
    <source>
    </source>
</evidence>
<evidence type="ECO:0000305" key="6"/>
<comment type="function">
    <text evidence="5">Microtubule-associated protein that stabilize microtubules (MT). Involved in the regulation of MT organization and dynamics. Confers MT resistance to the drug propyzamide and cold conditions.</text>
</comment>
<comment type="subunit">
    <text evidence="1 5">Forms a dimer (By similarity). Binds to microtubules (MT). Bundles polymerized MT via the formation of 25-nm crossbridges with centrally located endocytic MT.</text>
</comment>
<comment type="subcellular location">
    <subcellularLocation>
        <location evidence="6">Nucleus</location>
    </subcellularLocation>
    <subcellularLocation>
        <location>Cytoplasm</location>
    </subcellularLocation>
    <subcellularLocation>
        <location>Cytoplasm</location>
        <location>Cytoskeleton</location>
        <location>Spindle pole</location>
    </subcellularLocation>
    <subcellularLocation>
        <location>Cytoplasm</location>
        <location>Cytoskeleton</location>
        <location>Phragmoplast</location>
    </subcellularLocation>
    <text>During interphase, binds cortical microtubules. In M-phase, locates to the preprophase band. Decorates entire mitotic spindle during cell division. During the anaphase to telophase transition, accumulates in the midline where oppositely oriented phragmoplast MTs overlap. In the phragmoplast, colocalizes completely with the MTs.</text>
</comment>
<comment type="similarity">
    <text evidence="6">Belongs to the MAP65/ASE1 family.</text>
</comment>
<comment type="sequence caution" evidence="6">
    <conflict type="erroneous gene model prediction">
        <sequence resource="EMBL-CDS" id="CAB36522"/>
    </conflict>
</comment>
<comment type="sequence caution" evidence="6">
    <conflict type="erroneous gene model prediction">
        <sequence resource="EMBL-CDS" id="CAB79531"/>
    </conflict>
</comment>
<sequence length="578" mass="65205">MAVTEAENPLLGEITCGTLLQKLQEIWDEVGESDEERDKLLLQIEEECLNVYKKKVELAAKSRAELLQTLSDATVELSNLTTALGEKSYIDIPDKTSGTIKEQLSAIAPALEQLWQQKEERVRAFSDVQSQIQKICEEIAGGLNNGPHVVDETDLSLKRLDDFQRKLQELQKEKSDRLQKVLEFVSTVHDLCAVLRLDFLSTVTEVHPSLDEANGVQTKSISNETLARLAKTVLTLKEDKMQRLKKLQELATQLTDLWNLMDTSDEERELFDHVTSNISASVHEVTASGALALDLIEQAEVEVDRLDQLKSSRMKEIAFKKQSELEEIYARAHIEIKPEVVRERIMSLIDAGNTEPTELLADMDSQIAKAKEEAFSRKEILDRVEKWMSACEEESWLEDYNRDQNRYSASRGAHLNLKRAEKARILVSKITAMVDTLIAKTRAWEEENSMSFEYDGVPLLAMLDEYTMLRQEREDEKRRLKEQKKQQEQPHTDQESAFGSKPSPARPVSAKKPVGTRVNGGGLNETPMRRLSMNSNQNGSKSKRDSLNKIASPSNIVANTKDDAASPVSRADPVMASP</sequence>
<reference key="1">
    <citation type="journal article" date="1999" name="Nature">
        <title>Sequence and analysis of chromosome 4 of the plant Arabidopsis thaliana.</title>
        <authorList>
            <person name="Mayer K.F.X."/>
            <person name="Schueller C."/>
            <person name="Wambutt R."/>
            <person name="Murphy G."/>
            <person name="Volckaert G."/>
            <person name="Pohl T."/>
            <person name="Duesterhoeft A."/>
            <person name="Stiekema W."/>
            <person name="Entian K.-D."/>
            <person name="Terryn N."/>
            <person name="Harris B."/>
            <person name="Ansorge W."/>
            <person name="Brandt P."/>
            <person name="Grivell L.A."/>
            <person name="Rieger M."/>
            <person name="Weichselgartner M."/>
            <person name="de Simone V."/>
            <person name="Obermaier B."/>
            <person name="Mache R."/>
            <person name="Mueller M."/>
            <person name="Kreis M."/>
            <person name="Delseny M."/>
            <person name="Puigdomenech P."/>
            <person name="Watson M."/>
            <person name="Schmidtheini T."/>
            <person name="Reichert B."/>
            <person name="Portetelle D."/>
            <person name="Perez-Alonso M."/>
            <person name="Boutry M."/>
            <person name="Bancroft I."/>
            <person name="Vos P."/>
            <person name="Hoheisel J."/>
            <person name="Zimmermann W."/>
            <person name="Wedler H."/>
            <person name="Ridley P."/>
            <person name="Langham S.-A."/>
            <person name="McCullagh B."/>
            <person name="Bilham L."/>
            <person name="Robben J."/>
            <person name="van der Schueren J."/>
            <person name="Grymonprez B."/>
            <person name="Chuang Y.-J."/>
            <person name="Vandenbussche F."/>
            <person name="Braeken M."/>
            <person name="Weltjens I."/>
            <person name="Voet M."/>
            <person name="Bastiaens I."/>
            <person name="Aert R."/>
            <person name="Defoor E."/>
            <person name="Weitzenegger T."/>
            <person name="Bothe G."/>
            <person name="Ramsperger U."/>
            <person name="Hilbert H."/>
            <person name="Braun M."/>
            <person name="Holzer E."/>
            <person name="Brandt A."/>
            <person name="Peters S."/>
            <person name="van Staveren M."/>
            <person name="Dirkse W."/>
            <person name="Mooijman P."/>
            <person name="Klein Lankhorst R."/>
            <person name="Rose M."/>
            <person name="Hauf J."/>
            <person name="Koetter P."/>
            <person name="Berneiser S."/>
            <person name="Hempel S."/>
            <person name="Feldpausch M."/>
            <person name="Lamberth S."/>
            <person name="Van den Daele H."/>
            <person name="De Keyser A."/>
            <person name="Buysshaert C."/>
            <person name="Gielen J."/>
            <person name="Villarroel R."/>
            <person name="De Clercq R."/>
            <person name="van Montagu M."/>
            <person name="Rogers J."/>
            <person name="Cronin A."/>
            <person name="Quail M.A."/>
            <person name="Bray-Allen S."/>
            <person name="Clark L."/>
            <person name="Doggett J."/>
            <person name="Hall S."/>
            <person name="Kay M."/>
            <person name="Lennard N."/>
            <person name="McLay K."/>
            <person name="Mayes R."/>
            <person name="Pettett A."/>
            <person name="Rajandream M.A."/>
            <person name="Lyne M."/>
            <person name="Benes V."/>
            <person name="Rechmann S."/>
            <person name="Borkova D."/>
            <person name="Bloecker H."/>
            <person name="Scharfe M."/>
            <person name="Grimm M."/>
            <person name="Loehnert T.-H."/>
            <person name="Dose S."/>
            <person name="de Haan M."/>
            <person name="Maarse A.C."/>
            <person name="Schaefer M."/>
            <person name="Mueller-Auer S."/>
            <person name="Gabel C."/>
            <person name="Fuchs M."/>
            <person name="Fartmann B."/>
            <person name="Granderath K."/>
            <person name="Dauner D."/>
            <person name="Herzl A."/>
            <person name="Neumann S."/>
            <person name="Argiriou A."/>
            <person name="Vitale D."/>
            <person name="Liguori R."/>
            <person name="Piravandi E."/>
            <person name="Massenet O."/>
            <person name="Quigley F."/>
            <person name="Clabauld G."/>
            <person name="Muendlein A."/>
            <person name="Felber R."/>
            <person name="Schnabl S."/>
            <person name="Hiller R."/>
            <person name="Schmidt W."/>
            <person name="Lecharny A."/>
            <person name="Aubourg S."/>
            <person name="Chefdor F."/>
            <person name="Cooke R."/>
            <person name="Berger C."/>
            <person name="Monfort A."/>
            <person name="Casacuberta E."/>
            <person name="Gibbons T."/>
            <person name="Weber N."/>
            <person name="Vandenbol M."/>
            <person name="Bargues M."/>
            <person name="Terol J."/>
            <person name="Torres A."/>
            <person name="Perez-Perez A."/>
            <person name="Purnelle B."/>
            <person name="Bent E."/>
            <person name="Johnson S."/>
            <person name="Tacon D."/>
            <person name="Jesse T."/>
            <person name="Heijnen L."/>
            <person name="Schwarz S."/>
            <person name="Scholler P."/>
            <person name="Heber S."/>
            <person name="Francs P."/>
            <person name="Bielke C."/>
            <person name="Frishman D."/>
            <person name="Haase D."/>
            <person name="Lemcke K."/>
            <person name="Mewes H.-W."/>
            <person name="Stocker S."/>
            <person name="Zaccaria P."/>
            <person name="Bevan M."/>
            <person name="Wilson R.K."/>
            <person name="de la Bastide M."/>
            <person name="Habermann K."/>
            <person name="Parnell L."/>
            <person name="Dedhia N."/>
            <person name="Gnoj L."/>
            <person name="Schutz K."/>
            <person name="Huang E."/>
            <person name="Spiegel L."/>
            <person name="Sekhon M."/>
            <person name="Murray J."/>
            <person name="Sheet P."/>
            <person name="Cordes M."/>
            <person name="Abu-Threideh J."/>
            <person name="Stoneking T."/>
            <person name="Kalicki J."/>
            <person name="Graves T."/>
            <person name="Harmon G."/>
            <person name="Edwards J."/>
            <person name="Latreille P."/>
            <person name="Courtney L."/>
            <person name="Cloud J."/>
            <person name="Abbott A."/>
            <person name="Scott K."/>
            <person name="Johnson D."/>
            <person name="Minx P."/>
            <person name="Bentley D."/>
            <person name="Fulton B."/>
            <person name="Miller N."/>
            <person name="Greco T."/>
            <person name="Kemp K."/>
            <person name="Kramer J."/>
            <person name="Fulton L."/>
            <person name="Mardis E."/>
            <person name="Dante M."/>
            <person name="Pepin K."/>
            <person name="Hillier L.W."/>
            <person name="Nelson J."/>
            <person name="Spieth J."/>
            <person name="Ryan E."/>
            <person name="Andrews S."/>
            <person name="Geisel C."/>
            <person name="Layman D."/>
            <person name="Du H."/>
            <person name="Ali J."/>
            <person name="Berghoff A."/>
            <person name="Jones K."/>
            <person name="Drone K."/>
            <person name="Cotton M."/>
            <person name="Joshu C."/>
            <person name="Antonoiu B."/>
            <person name="Zidanic M."/>
            <person name="Strong C."/>
            <person name="Sun H."/>
            <person name="Lamar B."/>
            <person name="Yordan C."/>
            <person name="Ma P."/>
            <person name="Zhong J."/>
            <person name="Preston R."/>
            <person name="Vil D."/>
            <person name="Shekher M."/>
            <person name="Matero A."/>
            <person name="Shah R."/>
            <person name="Swaby I.K."/>
            <person name="O'Shaughnessy A."/>
            <person name="Rodriguez M."/>
            <person name="Hoffman J."/>
            <person name="Till S."/>
            <person name="Granat S."/>
            <person name="Shohdy N."/>
            <person name="Hasegawa A."/>
            <person name="Hameed A."/>
            <person name="Lodhi M."/>
            <person name="Johnson A."/>
            <person name="Chen E."/>
            <person name="Marra M.A."/>
            <person name="Martienssen R."/>
            <person name="McCombie W.R."/>
        </authorList>
    </citation>
    <scope>NUCLEOTIDE SEQUENCE [LARGE SCALE GENOMIC DNA]</scope>
    <source>
        <strain>cv. Columbia</strain>
    </source>
</reference>
<reference key="2">
    <citation type="journal article" date="2017" name="Plant J.">
        <title>Araport11: a complete reannotation of the Arabidopsis thaliana reference genome.</title>
        <authorList>
            <person name="Cheng C.Y."/>
            <person name="Krishnakumar V."/>
            <person name="Chan A.P."/>
            <person name="Thibaud-Nissen F."/>
            <person name="Schobel S."/>
            <person name="Town C.D."/>
        </authorList>
    </citation>
    <scope>GENOME REANNOTATION</scope>
    <source>
        <strain>cv. Columbia</strain>
    </source>
</reference>
<reference key="3">
    <citation type="submission" date="2002-03" db="EMBL/GenBank/DDBJ databases">
        <title>Full-length cDNA from Arabidopsis thaliana.</title>
        <authorList>
            <person name="Brover V.V."/>
            <person name="Troukhan M.E."/>
            <person name="Alexandrov N.A."/>
            <person name="Lu Y.-P."/>
            <person name="Flavell R.B."/>
            <person name="Feldmann K.A."/>
        </authorList>
    </citation>
    <scope>NUCLEOTIDE SEQUENCE [LARGE SCALE MRNA]</scope>
    <source>
        <strain>cv. Columbia</strain>
    </source>
</reference>
<reference key="4">
    <citation type="submission" date="2007-03" db="EMBL/GenBank/DDBJ databases">
        <title>Arabidopsis ORF clones.</title>
        <authorList>
            <person name="Bautista V.R."/>
            <person name="Kim C.J."/>
            <person name="Chen H."/>
            <person name="Wu S.Y."/>
            <person name="De Los Reyes C."/>
            <person name="Ecker J.R."/>
        </authorList>
    </citation>
    <scope>NUCLEOTIDE SEQUENCE [LARGE SCALE MRNA]</scope>
    <source>
        <strain>cv. Columbia</strain>
    </source>
</reference>
<reference key="5">
    <citation type="journal article" date="2002" name="Plant Mol. Biol.">
        <title>The plant cytoskeleton: recent advances in the study of the plant microtubule-associated proteins MAP-65, MAP-190 and the Xenopus MAP215-like protein, MOR1.</title>
        <authorList>
            <person name="Hussey P.J."/>
            <person name="Hawkins T.J."/>
            <person name="Igarashi H."/>
            <person name="Kaloriti D."/>
            <person name="Smertenko A."/>
        </authorList>
    </citation>
    <scope>GENE FAMILY</scope>
    <scope>NOMENCLATURE</scope>
</reference>
<reference key="6">
    <citation type="journal article" date="2004" name="Plant J.">
        <title>Molecular dissection of plant cytokinesis and phragmoplast structure: a survey of GFP-tagged proteins.</title>
        <authorList>
            <person name="Van Damme D."/>
            <person name="Bouget F.-Y."/>
            <person name="Van Poucke K."/>
            <person name="Inze D."/>
            <person name="Geelen D."/>
        </authorList>
    </citation>
    <scope>INTERACTION WITH MICROTUBULES</scope>
    <scope>SUBCELLULAR LOCATION</scope>
</reference>
<reference key="7">
    <citation type="journal article" date="2009" name="Plant Mol. Biol.">
        <title>Arabidopsis microtubule-associated protein AtMAP65-2 acts as a microtubule stabilizer.</title>
        <authorList>
            <person name="Li H."/>
            <person name="Zeng X."/>
            <person name="Liu Z.-Q."/>
            <person name="Meng Q.-T."/>
            <person name="Yuan M."/>
            <person name="Mao T.-L."/>
        </authorList>
    </citation>
    <scope>FUNCTION</scope>
    <scope>SUBUNIT</scope>
    <scope>SUBCELLULAR LOCATION</scope>
</reference>
<name>MA652_ARATH</name>
<accession>Q8LEG3</accession>
<accession>Q9SZ16</accession>